<protein>
    <recommendedName>
        <fullName>Uncharacterized protein AF_1714</fullName>
    </recommendedName>
</protein>
<organism>
    <name type="scientific">Archaeoglobus fulgidus (strain ATCC 49558 / DSM 4304 / JCM 9628 / NBRC 100126 / VC-16)</name>
    <dbReference type="NCBI Taxonomy" id="224325"/>
    <lineage>
        <taxon>Archaea</taxon>
        <taxon>Methanobacteriati</taxon>
        <taxon>Methanobacteriota</taxon>
        <taxon>Archaeoglobi</taxon>
        <taxon>Archaeoglobales</taxon>
        <taxon>Archaeoglobaceae</taxon>
        <taxon>Archaeoglobus</taxon>
    </lineage>
</organism>
<accession>O28559</accession>
<sequence length="60" mass="7066">MGEVTIKVSVPDNAEKAFRKAVEETAKFFNERDRFFELMNELKGVIKTDKSWMELKRDLV</sequence>
<dbReference type="EMBL" id="AE000782">
    <property type="protein sequence ID" value="AAB89542.1"/>
    <property type="molecule type" value="Genomic_DNA"/>
</dbReference>
<dbReference type="PIR" id="A69464">
    <property type="entry name" value="A69464"/>
</dbReference>
<dbReference type="RefSeq" id="WP_010879210.1">
    <property type="nucleotide sequence ID" value="NC_000917.1"/>
</dbReference>
<dbReference type="SMR" id="O28559"/>
<dbReference type="PaxDb" id="224325-AF_1714"/>
<dbReference type="EnsemblBacteria" id="AAB89542">
    <property type="protein sequence ID" value="AAB89542"/>
    <property type="gene ID" value="AF_1714"/>
</dbReference>
<dbReference type="KEGG" id="afu:AF_1714"/>
<dbReference type="eggNOG" id="arCOG06140">
    <property type="taxonomic scope" value="Archaea"/>
</dbReference>
<dbReference type="HOGENOM" id="CLU_190409_1_0_2"/>
<dbReference type="OrthoDB" id="90469at2157"/>
<dbReference type="Proteomes" id="UP000002199">
    <property type="component" value="Chromosome"/>
</dbReference>
<name>Y1714_ARCFU</name>
<proteinExistence type="predicted"/>
<feature type="chain" id="PRO_0000128049" description="Uncharacterized protein AF_1714">
    <location>
        <begin position="1"/>
        <end position="60"/>
    </location>
</feature>
<gene>
    <name type="ordered locus">AF_1714</name>
</gene>
<reference key="1">
    <citation type="journal article" date="1997" name="Nature">
        <title>The complete genome sequence of the hyperthermophilic, sulphate-reducing archaeon Archaeoglobus fulgidus.</title>
        <authorList>
            <person name="Klenk H.-P."/>
            <person name="Clayton R.A."/>
            <person name="Tomb J.-F."/>
            <person name="White O."/>
            <person name="Nelson K.E."/>
            <person name="Ketchum K.A."/>
            <person name="Dodson R.J."/>
            <person name="Gwinn M.L."/>
            <person name="Hickey E.K."/>
            <person name="Peterson J.D."/>
            <person name="Richardson D.L."/>
            <person name="Kerlavage A.R."/>
            <person name="Graham D.E."/>
            <person name="Kyrpides N.C."/>
            <person name="Fleischmann R.D."/>
            <person name="Quackenbush J."/>
            <person name="Lee N.H."/>
            <person name="Sutton G.G."/>
            <person name="Gill S.R."/>
            <person name="Kirkness E.F."/>
            <person name="Dougherty B.A."/>
            <person name="McKenney K."/>
            <person name="Adams M.D."/>
            <person name="Loftus B.J."/>
            <person name="Peterson S.N."/>
            <person name="Reich C.I."/>
            <person name="McNeil L.K."/>
            <person name="Badger J.H."/>
            <person name="Glodek A."/>
            <person name="Zhou L."/>
            <person name="Overbeek R."/>
            <person name="Gocayne J.D."/>
            <person name="Weidman J.F."/>
            <person name="McDonald L.A."/>
            <person name="Utterback T.R."/>
            <person name="Cotton M.D."/>
            <person name="Spriggs T."/>
            <person name="Artiach P."/>
            <person name="Kaine B.P."/>
            <person name="Sykes S.M."/>
            <person name="Sadow P.W."/>
            <person name="D'Andrea K.P."/>
            <person name="Bowman C."/>
            <person name="Fujii C."/>
            <person name="Garland S.A."/>
            <person name="Mason T.M."/>
            <person name="Olsen G.J."/>
            <person name="Fraser C.M."/>
            <person name="Smith H.O."/>
            <person name="Woese C.R."/>
            <person name="Venter J.C."/>
        </authorList>
    </citation>
    <scope>NUCLEOTIDE SEQUENCE [LARGE SCALE GENOMIC DNA]</scope>
    <source>
        <strain>ATCC 49558 / DSM 4304 / JCM 9628 / NBRC 100126 / VC-16</strain>
    </source>
</reference>
<keyword id="KW-1185">Reference proteome</keyword>